<comment type="function">
    <text evidence="1">Plays a role in cardiac repolarization possibly by stabilizing membrane expression of the potassium channel KCNH2/HERG, or by assisting its synthesis, folding or export from the endoplasmic reticulum, in a heat shock protein-dependent manner.</text>
</comment>
<comment type="subunit">
    <text evidence="1">Interacts with the core-glycosylated, but not the fully glycosylated form of KCNH2/HERG. Interacts with DNAJA1 and HSPA8. Interacts (via the C-terminus) with HSPA1A; this interaction additively increases KCNH2 expression.</text>
</comment>
<comment type="subcellular location">
    <subcellularLocation>
        <location evidence="1">Cytoplasm</location>
    </subcellularLocation>
    <text evidence="1">Probably located in the endoplasmic reticulum and/or possibly the cis-Golgi apparatus.</text>
</comment>
<comment type="alternative products">
    <event type="alternative splicing"/>
    <isoform>
        <id>A0JNG4-1</id>
        <name>1</name>
        <sequence type="displayed"/>
    </isoform>
    <isoform>
        <id>A0JNG4-2</id>
        <name>2</name>
        <sequence type="described" ref="VSP_028438"/>
    </isoform>
</comment>
<feature type="chain" id="PRO_0000300808" description="RING finger protein 207">
    <location>
        <begin position="1"/>
        <end position="556"/>
    </location>
</feature>
<feature type="zinc finger region" description="RING-type" evidence="4">
    <location>
        <begin position="25"/>
        <end position="64"/>
    </location>
</feature>
<feature type="zinc finger region" description="B box-type; atypical" evidence="3">
    <location>
        <begin position="93"/>
        <end position="145"/>
    </location>
</feature>
<feature type="region of interest" description="Disordered" evidence="5">
    <location>
        <begin position="517"/>
        <end position="556"/>
    </location>
</feature>
<feature type="coiled-coil region" evidence="2">
    <location>
        <begin position="218"/>
        <end position="273"/>
    </location>
</feature>
<feature type="coiled-coil region" evidence="2">
    <location>
        <begin position="385"/>
        <end position="425"/>
    </location>
</feature>
<feature type="compositionally biased region" description="Basic and acidic residues" evidence="5">
    <location>
        <begin position="524"/>
        <end position="535"/>
    </location>
</feature>
<feature type="binding site" evidence="3">
    <location>
        <position position="98"/>
    </location>
    <ligand>
        <name>Zn(2+)</name>
        <dbReference type="ChEBI" id="CHEBI:29105"/>
    </ligand>
</feature>
<feature type="binding site" evidence="3">
    <location>
        <position position="101"/>
    </location>
    <ligand>
        <name>Zn(2+)</name>
        <dbReference type="ChEBI" id="CHEBI:29105"/>
    </ligand>
</feature>
<feature type="binding site" evidence="3">
    <location>
        <position position="127"/>
    </location>
    <ligand>
        <name>Zn(2+)</name>
        <dbReference type="ChEBI" id="CHEBI:29105"/>
    </ligand>
</feature>
<feature type="binding site" evidence="3">
    <location>
        <position position="132"/>
    </location>
    <ligand>
        <name>Zn(2+)</name>
        <dbReference type="ChEBI" id="CHEBI:29105"/>
    </ligand>
</feature>
<feature type="splice variant" id="VSP_028438" description="In isoform 2." evidence="6">
    <location>
        <begin position="1"/>
        <end position="356"/>
    </location>
</feature>
<name>RN207_BOVIN</name>
<evidence type="ECO:0000250" key="1">
    <source>
        <dbReference type="UniProtKB" id="Q6ZRF8"/>
    </source>
</evidence>
<evidence type="ECO:0000255" key="2"/>
<evidence type="ECO:0000255" key="3">
    <source>
        <dbReference type="PROSITE-ProRule" id="PRU00024"/>
    </source>
</evidence>
<evidence type="ECO:0000255" key="4">
    <source>
        <dbReference type="PROSITE-ProRule" id="PRU00175"/>
    </source>
</evidence>
<evidence type="ECO:0000256" key="5">
    <source>
        <dbReference type="SAM" id="MobiDB-lite"/>
    </source>
</evidence>
<evidence type="ECO:0000303" key="6">
    <source ref="1"/>
</evidence>
<proteinExistence type="evidence at transcript level"/>
<organism>
    <name type="scientific">Bos taurus</name>
    <name type="common">Bovine</name>
    <dbReference type="NCBI Taxonomy" id="9913"/>
    <lineage>
        <taxon>Eukaryota</taxon>
        <taxon>Metazoa</taxon>
        <taxon>Chordata</taxon>
        <taxon>Craniata</taxon>
        <taxon>Vertebrata</taxon>
        <taxon>Euteleostomi</taxon>
        <taxon>Mammalia</taxon>
        <taxon>Eutheria</taxon>
        <taxon>Laurasiatheria</taxon>
        <taxon>Artiodactyla</taxon>
        <taxon>Ruminantia</taxon>
        <taxon>Pecora</taxon>
        <taxon>Bovidae</taxon>
        <taxon>Bovinae</taxon>
        <taxon>Bos</taxon>
    </lineage>
</organism>
<dbReference type="EMBL" id="BC123895">
    <property type="protein sequence ID" value="AAI23896.1"/>
    <property type="molecule type" value="mRNA"/>
</dbReference>
<dbReference type="EMBL" id="BC126674">
    <property type="protein sequence ID" value="AAI26675.1"/>
    <property type="molecule type" value="mRNA"/>
</dbReference>
<dbReference type="RefSeq" id="NP_001071525.1">
    <molecule id="A0JNG4-1"/>
    <property type="nucleotide sequence ID" value="NM_001078057.1"/>
</dbReference>
<dbReference type="RefSeq" id="XP_059731526.1">
    <molecule id="A0JNG4-1"/>
    <property type="nucleotide sequence ID" value="XM_059875543.1"/>
</dbReference>
<dbReference type="SMR" id="A0JNG4"/>
<dbReference type="FunCoup" id="A0JNG4">
    <property type="interactions" value="37"/>
</dbReference>
<dbReference type="STRING" id="9913.ENSBTAP00000066184"/>
<dbReference type="PaxDb" id="9913-ENSBTAP00000034008"/>
<dbReference type="Ensembl" id="ENSBTAT00000034107.5">
    <molecule id="A0JNG4-1"/>
    <property type="protein sequence ID" value="ENSBTAP00000034008.5"/>
    <property type="gene ID" value="ENSBTAG00000009075.7"/>
</dbReference>
<dbReference type="GeneID" id="616057"/>
<dbReference type="KEGG" id="bta:616057"/>
<dbReference type="CTD" id="388591"/>
<dbReference type="VEuPathDB" id="HostDB:ENSBTAG00000009075"/>
<dbReference type="eggNOG" id="KOG2177">
    <property type="taxonomic scope" value="Eukaryota"/>
</dbReference>
<dbReference type="GeneTree" id="ENSGT00510000048612"/>
<dbReference type="InParanoid" id="A0JNG4"/>
<dbReference type="OrthoDB" id="9049620at2759"/>
<dbReference type="Proteomes" id="UP000009136">
    <property type="component" value="Chromosome 16"/>
</dbReference>
<dbReference type="Bgee" id="ENSBTAG00000009075">
    <property type="expression patterns" value="Expressed in cardiac atrium and 105 other cell types or tissues"/>
</dbReference>
<dbReference type="GO" id="GO:0048471">
    <property type="term" value="C:perinuclear region of cytoplasm"/>
    <property type="evidence" value="ECO:0000318"/>
    <property type="project" value="GO_Central"/>
</dbReference>
<dbReference type="GO" id="GO:0030544">
    <property type="term" value="F:Hsp70 protein binding"/>
    <property type="evidence" value="ECO:0000318"/>
    <property type="project" value="GO_Central"/>
</dbReference>
<dbReference type="GO" id="GO:0044325">
    <property type="term" value="F:transmembrane transporter binding"/>
    <property type="evidence" value="ECO:0000318"/>
    <property type="project" value="GO_Central"/>
</dbReference>
<dbReference type="GO" id="GO:0008270">
    <property type="term" value="F:zinc ion binding"/>
    <property type="evidence" value="ECO:0007669"/>
    <property type="project" value="UniProtKB-KW"/>
</dbReference>
<dbReference type="GO" id="GO:0055117">
    <property type="term" value="P:regulation of cardiac muscle contraction"/>
    <property type="evidence" value="ECO:0000318"/>
    <property type="project" value="GO_Central"/>
</dbReference>
<dbReference type="GO" id="GO:1901207">
    <property type="term" value="P:regulation of heart looping"/>
    <property type="evidence" value="ECO:0000318"/>
    <property type="project" value="GO_Central"/>
</dbReference>
<dbReference type="CDD" id="cd19814">
    <property type="entry name" value="Bbox1_RNF207-like"/>
    <property type="match status" value="1"/>
</dbReference>
<dbReference type="FunFam" id="1.20.58.1540:FF:000002">
    <property type="entry name" value="Ring finger protein 207"/>
    <property type="match status" value="1"/>
</dbReference>
<dbReference type="FunFam" id="3.30.40.10:FF:000478">
    <property type="entry name" value="Ring finger protein 207"/>
    <property type="match status" value="1"/>
</dbReference>
<dbReference type="Gene3D" id="1.20.58.1540">
    <property type="entry name" value="Actin interacting protein 3, C-terminal domain"/>
    <property type="match status" value="1"/>
</dbReference>
<dbReference type="Gene3D" id="3.30.160.60">
    <property type="entry name" value="Classic Zinc Finger"/>
    <property type="match status" value="1"/>
</dbReference>
<dbReference type="Gene3D" id="3.30.40.10">
    <property type="entry name" value="Zinc/RING finger domain, C3HC4 (zinc finger)"/>
    <property type="match status" value="1"/>
</dbReference>
<dbReference type="InterPro" id="IPR039320">
    <property type="entry name" value="RNF207"/>
</dbReference>
<dbReference type="InterPro" id="IPR000315">
    <property type="entry name" value="Znf_B-box"/>
</dbReference>
<dbReference type="InterPro" id="IPR018957">
    <property type="entry name" value="Znf_C3HC4_RING-type"/>
</dbReference>
<dbReference type="InterPro" id="IPR001841">
    <property type="entry name" value="Znf_RING"/>
</dbReference>
<dbReference type="InterPro" id="IPR013083">
    <property type="entry name" value="Znf_RING/FYVE/PHD"/>
</dbReference>
<dbReference type="InterPro" id="IPR017907">
    <property type="entry name" value="Znf_RING_CS"/>
</dbReference>
<dbReference type="PANTHER" id="PTHR22635">
    <property type="entry name" value="RING FINGER PROTEIN 207"/>
    <property type="match status" value="1"/>
</dbReference>
<dbReference type="PANTHER" id="PTHR22635:SF0">
    <property type="entry name" value="RING FINGER PROTEIN 207"/>
    <property type="match status" value="1"/>
</dbReference>
<dbReference type="Pfam" id="PF00643">
    <property type="entry name" value="zf-B_box"/>
    <property type="match status" value="1"/>
</dbReference>
<dbReference type="Pfam" id="PF00097">
    <property type="entry name" value="zf-C3HC4"/>
    <property type="match status" value="1"/>
</dbReference>
<dbReference type="SMART" id="SM00184">
    <property type="entry name" value="RING"/>
    <property type="match status" value="1"/>
</dbReference>
<dbReference type="SUPFAM" id="SSF57850">
    <property type="entry name" value="RING/U-box"/>
    <property type="match status" value="1"/>
</dbReference>
<dbReference type="PROSITE" id="PS50119">
    <property type="entry name" value="ZF_BBOX"/>
    <property type="match status" value="1"/>
</dbReference>
<dbReference type="PROSITE" id="PS00518">
    <property type="entry name" value="ZF_RING_1"/>
    <property type="match status" value="1"/>
</dbReference>
<dbReference type="PROSITE" id="PS50089">
    <property type="entry name" value="ZF_RING_2"/>
    <property type="match status" value="1"/>
</dbReference>
<accession>A0JNG4</accession>
<accession>Q08D80</accession>
<gene>
    <name type="primary">RNF207</name>
</gene>
<sequence length="556" mass="61668">MSGAIFTSLEGPGALDGTSGHPLVCPLCHAQYERPCLLDCFHEFCAGCLRGRAADGRLACPLCQHQTVVKGPSGLPPVDRLLQFLVDSSGDGTEVVRCANCDLECGKQDAETTYFCNTCGQPLCARCRDETHRARMFARHDIVALGQRSRDVLQKCTLHAEPYVLFSTDKKSLLCIRCFRDMQGESRVHCVDLESAYVQGCERLQQAVLEVKALQTATREAIELLQAMVEEVRRSAAEEEAAIQALFSSMQDKLSERKALLLQAVQSLANKAEFLDLGYELMERLQGIVTRPHRLRPAQSSKITSDHRAEFARCLEPLLLLGPRRAAGAGGGTSTLTGGLGPKVLRGPGCPSPVGKMLGSPVQKPTLHRSISTKVLLAEGDASPFTEHCRHYEDSYRRLQAEMQNLKDQVQELHRDLTKHHSLIKAEIMGDILHKALQVDAQIASEYASVEGLRAVFQEIWEDSYQRVANEQEIYEAQLHDLLQLKQENAYLTTITKQITPYIRSIAKVKERLEPRFQVPVDEPSDHPQNTHDDGVNAEAPARVSTLKPAMEKEVS</sequence>
<protein>
    <recommendedName>
        <fullName>RING finger protein 207</fullName>
    </recommendedName>
</protein>
<keyword id="KW-0025">Alternative splicing</keyword>
<keyword id="KW-0175">Coiled coil</keyword>
<keyword id="KW-0963">Cytoplasm</keyword>
<keyword id="KW-0479">Metal-binding</keyword>
<keyword id="KW-1185">Reference proteome</keyword>
<keyword id="KW-0862">Zinc</keyword>
<keyword id="KW-0863">Zinc-finger</keyword>
<reference key="1">
    <citation type="submission" date="2006-10" db="EMBL/GenBank/DDBJ databases">
        <authorList>
            <consortium name="NIH - Mammalian Gene Collection (MGC) project"/>
        </authorList>
    </citation>
    <scope>NUCLEOTIDE SEQUENCE [LARGE SCALE MRNA] (ISOFORMS 1 AND 2)</scope>
    <source>
        <strain>Hereford</strain>
        <tissue>Basal ganglia</tissue>
        <tissue>Heart ventricle</tissue>
    </source>
</reference>